<comment type="function">
    <text evidence="1">The RuvA-RuvB-RuvC complex processes Holliday junction (HJ) DNA during genetic recombination and DNA repair, while the RuvA-RuvB complex plays an important role in the rescue of blocked DNA replication forks via replication fork reversal (RFR). RuvA specifically binds to HJ cruciform DNA, conferring on it an open structure. The RuvB hexamer acts as an ATP-dependent pump, pulling dsDNA into and through the RuvAB complex. RuvB forms 2 homohexamers on either side of HJ DNA bound by 1 or 2 RuvA tetramers; 4 subunits per hexamer contact DNA at a time. Coordinated motions by a converter formed by DNA-disengaged RuvB subunits stimulates ATP hydrolysis and nucleotide exchange. Immobilization of the converter enables RuvB to convert the ATP-contained energy into a lever motion, pulling 2 nucleotides of DNA out of the RuvA tetramer per ATP hydrolyzed, thus driving DNA branch migration. The RuvB motors rotate together with the DNA substrate, which together with the progressing nucleotide cycle form the mechanistic basis for DNA recombination by continuous HJ branch migration. Branch migration allows RuvC to scan DNA until it finds its consensus sequence, where it cleaves and resolves cruciform DNA.</text>
</comment>
<comment type="catalytic activity">
    <reaction evidence="1">
        <text>ATP + H2O = ADP + phosphate + H(+)</text>
        <dbReference type="Rhea" id="RHEA:13065"/>
        <dbReference type="ChEBI" id="CHEBI:15377"/>
        <dbReference type="ChEBI" id="CHEBI:15378"/>
        <dbReference type="ChEBI" id="CHEBI:30616"/>
        <dbReference type="ChEBI" id="CHEBI:43474"/>
        <dbReference type="ChEBI" id="CHEBI:456216"/>
    </reaction>
</comment>
<comment type="subunit">
    <text evidence="1">Homohexamer. Forms an RuvA(8)-RuvB(12)-Holliday junction (HJ) complex. HJ DNA is sandwiched between 2 RuvA tetramers; dsDNA enters through RuvA and exits via RuvB. An RuvB hexamer assembles on each DNA strand where it exits the tetramer. Each RuvB hexamer is contacted by two RuvA subunits (via domain III) on 2 adjacent RuvB subunits; this complex drives branch migration. In the full resolvosome a probable DNA-RuvA(4)-RuvB(12)-RuvC(2) complex forms which resolves the HJ.</text>
</comment>
<comment type="subcellular location">
    <subcellularLocation>
        <location evidence="1">Cytoplasm</location>
    </subcellularLocation>
</comment>
<comment type="domain">
    <text evidence="1">Has 3 domains, the large (RuvB-L) and small ATPase (RuvB-S) domains and the C-terminal head (RuvB-H) domain. The head domain binds DNA, while the ATPase domains jointly bind ATP, ADP or are empty depending on the state of the subunit in the translocation cycle. During a single DNA translocation step the structure of each domain remains the same, but their relative positions change.</text>
</comment>
<comment type="similarity">
    <text evidence="1">Belongs to the RuvB family.</text>
</comment>
<proteinExistence type="inferred from homology"/>
<feature type="chain" id="PRO_1000001360" description="Holliday junction branch migration complex subunit RuvB">
    <location>
        <begin position="1"/>
        <end position="336"/>
    </location>
</feature>
<feature type="region of interest" description="Large ATPase domain (RuvB-L)" evidence="1">
    <location>
        <begin position="4"/>
        <end position="184"/>
    </location>
</feature>
<feature type="region of interest" description="Small ATPAse domain (RuvB-S)" evidence="1">
    <location>
        <begin position="185"/>
        <end position="255"/>
    </location>
</feature>
<feature type="region of interest" description="Head domain (RuvB-H)" evidence="1">
    <location>
        <begin position="258"/>
        <end position="336"/>
    </location>
</feature>
<feature type="binding site" evidence="1">
    <location>
        <position position="23"/>
    </location>
    <ligand>
        <name>ATP</name>
        <dbReference type="ChEBI" id="CHEBI:30616"/>
    </ligand>
</feature>
<feature type="binding site" evidence="1">
    <location>
        <position position="24"/>
    </location>
    <ligand>
        <name>ATP</name>
        <dbReference type="ChEBI" id="CHEBI:30616"/>
    </ligand>
</feature>
<feature type="binding site" evidence="1">
    <location>
        <position position="65"/>
    </location>
    <ligand>
        <name>ATP</name>
        <dbReference type="ChEBI" id="CHEBI:30616"/>
    </ligand>
</feature>
<feature type="binding site" evidence="1">
    <location>
        <position position="68"/>
    </location>
    <ligand>
        <name>ATP</name>
        <dbReference type="ChEBI" id="CHEBI:30616"/>
    </ligand>
</feature>
<feature type="binding site" evidence="1">
    <location>
        <position position="69"/>
    </location>
    <ligand>
        <name>ATP</name>
        <dbReference type="ChEBI" id="CHEBI:30616"/>
    </ligand>
</feature>
<feature type="binding site" evidence="1">
    <location>
        <position position="69"/>
    </location>
    <ligand>
        <name>Mg(2+)</name>
        <dbReference type="ChEBI" id="CHEBI:18420"/>
    </ligand>
</feature>
<feature type="binding site" evidence="1">
    <location>
        <position position="70"/>
    </location>
    <ligand>
        <name>ATP</name>
        <dbReference type="ChEBI" id="CHEBI:30616"/>
    </ligand>
</feature>
<feature type="binding site" evidence="1">
    <location>
        <begin position="131"/>
        <end position="133"/>
    </location>
    <ligand>
        <name>ATP</name>
        <dbReference type="ChEBI" id="CHEBI:30616"/>
    </ligand>
</feature>
<feature type="binding site" evidence="1">
    <location>
        <position position="174"/>
    </location>
    <ligand>
        <name>ATP</name>
        <dbReference type="ChEBI" id="CHEBI:30616"/>
    </ligand>
</feature>
<feature type="binding site" evidence="1">
    <location>
        <position position="184"/>
    </location>
    <ligand>
        <name>ATP</name>
        <dbReference type="ChEBI" id="CHEBI:30616"/>
    </ligand>
</feature>
<feature type="binding site" evidence="1">
    <location>
        <position position="221"/>
    </location>
    <ligand>
        <name>ATP</name>
        <dbReference type="ChEBI" id="CHEBI:30616"/>
    </ligand>
</feature>
<feature type="binding site" evidence="1">
    <location>
        <position position="313"/>
    </location>
    <ligand>
        <name>DNA</name>
        <dbReference type="ChEBI" id="CHEBI:16991"/>
    </ligand>
</feature>
<feature type="binding site" evidence="1">
    <location>
        <position position="318"/>
    </location>
    <ligand>
        <name>DNA</name>
        <dbReference type="ChEBI" id="CHEBI:16991"/>
    </ligand>
</feature>
<dbReference type="EC" id="3.6.4.-" evidence="1"/>
<dbReference type="EMBL" id="CP000644">
    <property type="protein sequence ID" value="ABO88898.1"/>
    <property type="molecule type" value="Genomic_DNA"/>
</dbReference>
<dbReference type="RefSeq" id="WP_005313309.1">
    <property type="nucleotide sequence ID" value="NC_009348.1"/>
</dbReference>
<dbReference type="SMR" id="A4SJ26"/>
<dbReference type="STRING" id="29491.GCA_000820065_01753"/>
<dbReference type="GeneID" id="79878280"/>
<dbReference type="KEGG" id="asa:ASA_0736"/>
<dbReference type="eggNOG" id="COG2255">
    <property type="taxonomic scope" value="Bacteria"/>
</dbReference>
<dbReference type="HOGENOM" id="CLU_055599_1_0_6"/>
<dbReference type="Proteomes" id="UP000000225">
    <property type="component" value="Chromosome"/>
</dbReference>
<dbReference type="GO" id="GO:0005737">
    <property type="term" value="C:cytoplasm"/>
    <property type="evidence" value="ECO:0007669"/>
    <property type="project" value="UniProtKB-SubCell"/>
</dbReference>
<dbReference type="GO" id="GO:0048476">
    <property type="term" value="C:Holliday junction resolvase complex"/>
    <property type="evidence" value="ECO:0007669"/>
    <property type="project" value="UniProtKB-UniRule"/>
</dbReference>
<dbReference type="GO" id="GO:0005524">
    <property type="term" value="F:ATP binding"/>
    <property type="evidence" value="ECO:0007669"/>
    <property type="project" value="UniProtKB-UniRule"/>
</dbReference>
<dbReference type="GO" id="GO:0016887">
    <property type="term" value="F:ATP hydrolysis activity"/>
    <property type="evidence" value="ECO:0007669"/>
    <property type="project" value="InterPro"/>
</dbReference>
<dbReference type="GO" id="GO:0000400">
    <property type="term" value="F:four-way junction DNA binding"/>
    <property type="evidence" value="ECO:0007669"/>
    <property type="project" value="UniProtKB-UniRule"/>
</dbReference>
<dbReference type="GO" id="GO:0009378">
    <property type="term" value="F:four-way junction helicase activity"/>
    <property type="evidence" value="ECO:0007669"/>
    <property type="project" value="InterPro"/>
</dbReference>
<dbReference type="GO" id="GO:0006310">
    <property type="term" value="P:DNA recombination"/>
    <property type="evidence" value="ECO:0007669"/>
    <property type="project" value="UniProtKB-UniRule"/>
</dbReference>
<dbReference type="GO" id="GO:0006281">
    <property type="term" value="P:DNA repair"/>
    <property type="evidence" value="ECO:0007669"/>
    <property type="project" value="UniProtKB-UniRule"/>
</dbReference>
<dbReference type="CDD" id="cd00009">
    <property type="entry name" value="AAA"/>
    <property type="match status" value="1"/>
</dbReference>
<dbReference type="FunFam" id="1.10.10.10:FF:000086">
    <property type="entry name" value="Holliday junction ATP-dependent DNA helicase RuvB"/>
    <property type="match status" value="1"/>
</dbReference>
<dbReference type="FunFam" id="1.10.8.60:FF:000023">
    <property type="entry name" value="Holliday junction ATP-dependent DNA helicase RuvB"/>
    <property type="match status" value="1"/>
</dbReference>
<dbReference type="FunFam" id="3.40.50.300:FF:000073">
    <property type="entry name" value="Holliday junction ATP-dependent DNA helicase RuvB"/>
    <property type="match status" value="1"/>
</dbReference>
<dbReference type="Gene3D" id="1.10.8.60">
    <property type="match status" value="1"/>
</dbReference>
<dbReference type="Gene3D" id="3.40.50.300">
    <property type="entry name" value="P-loop containing nucleotide triphosphate hydrolases"/>
    <property type="match status" value="1"/>
</dbReference>
<dbReference type="Gene3D" id="1.10.10.10">
    <property type="entry name" value="Winged helix-like DNA-binding domain superfamily/Winged helix DNA-binding domain"/>
    <property type="match status" value="1"/>
</dbReference>
<dbReference type="HAMAP" id="MF_00016">
    <property type="entry name" value="DNA_HJ_migration_RuvB"/>
    <property type="match status" value="1"/>
</dbReference>
<dbReference type="InterPro" id="IPR003593">
    <property type="entry name" value="AAA+_ATPase"/>
</dbReference>
<dbReference type="InterPro" id="IPR041445">
    <property type="entry name" value="AAA_lid_4"/>
</dbReference>
<dbReference type="InterPro" id="IPR004605">
    <property type="entry name" value="DNA_helicase_Holl-junc_RuvB"/>
</dbReference>
<dbReference type="InterPro" id="IPR027417">
    <property type="entry name" value="P-loop_NTPase"/>
</dbReference>
<dbReference type="InterPro" id="IPR008824">
    <property type="entry name" value="RuvB-like_N"/>
</dbReference>
<dbReference type="InterPro" id="IPR008823">
    <property type="entry name" value="RuvB_C"/>
</dbReference>
<dbReference type="InterPro" id="IPR036388">
    <property type="entry name" value="WH-like_DNA-bd_sf"/>
</dbReference>
<dbReference type="InterPro" id="IPR036390">
    <property type="entry name" value="WH_DNA-bd_sf"/>
</dbReference>
<dbReference type="NCBIfam" id="NF000868">
    <property type="entry name" value="PRK00080.1"/>
    <property type="match status" value="1"/>
</dbReference>
<dbReference type="NCBIfam" id="TIGR00635">
    <property type="entry name" value="ruvB"/>
    <property type="match status" value="1"/>
</dbReference>
<dbReference type="PANTHER" id="PTHR42848">
    <property type="match status" value="1"/>
</dbReference>
<dbReference type="PANTHER" id="PTHR42848:SF1">
    <property type="entry name" value="HOLLIDAY JUNCTION BRANCH MIGRATION COMPLEX SUBUNIT RUVB"/>
    <property type="match status" value="1"/>
</dbReference>
<dbReference type="Pfam" id="PF17864">
    <property type="entry name" value="AAA_lid_4"/>
    <property type="match status" value="1"/>
</dbReference>
<dbReference type="Pfam" id="PF05491">
    <property type="entry name" value="RuvB_C"/>
    <property type="match status" value="1"/>
</dbReference>
<dbReference type="Pfam" id="PF05496">
    <property type="entry name" value="RuvB_N"/>
    <property type="match status" value="1"/>
</dbReference>
<dbReference type="SMART" id="SM00382">
    <property type="entry name" value="AAA"/>
    <property type="match status" value="1"/>
</dbReference>
<dbReference type="SUPFAM" id="SSF52540">
    <property type="entry name" value="P-loop containing nucleoside triphosphate hydrolases"/>
    <property type="match status" value="1"/>
</dbReference>
<dbReference type="SUPFAM" id="SSF46785">
    <property type="entry name" value="Winged helix' DNA-binding domain"/>
    <property type="match status" value="1"/>
</dbReference>
<gene>
    <name evidence="1" type="primary">ruvB</name>
    <name type="ordered locus">ASA_0736</name>
</gene>
<organism>
    <name type="scientific">Aeromonas salmonicida (strain A449)</name>
    <dbReference type="NCBI Taxonomy" id="382245"/>
    <lineage>
        <taxon>Bacteria</taxon>
        <taxon>Pseudomonadati</taxon>
        <taxon>Pseudomonadota</taxon>
        <taxon>Gammaproteobacteria</taxon>
        <taxon>Aeromonadales</taxon>
        <taxon>Aeromonadaceae</taxon>
        <taxon>Aeromonas</taxon>
    </lineage>
</organism>
<accession>A4SJ26</accession>
<evidence type="ECO:0000255" key="1">
    <source>
        <dbReference type="HAMAP-Rule" id="MF_00016"/>
    </source>
</evidence>
<protein>
    <recommendedName>
        <fullName evidence="1">Holliday junction branch migration complex subunit RuvB</fullName>
        <ecNumber evidence="1">3.6.4.-</ecNumber>
    </recommendedName>
</protein>
<name>RUVB_AERS4</name>
<reference key="1">
    <citation type="journal article" date="2008" name="BMC Genomics">
        <title>The genome of Aeromonas salmonicida subsp. salmonicida A449: insights into the evolution of a fish pathogen.</title>
        <authorList>
            <person name="Reith M.E."/>
            <person name="Singh R.K."/>
            <person name="Curtis B."/>
            <person name="Boyd J.M."/>
            <person name="Bouevitch A."/>
            <person name="Kimball J."/>
            <person name="Munholland J."/>
            <person name="Murphy C."/>
            <person name="Sarty D."/>
            <person name="Williams J."/>
            <person name="Nash J.H."/>
            <person name="Johnson S.C."/>
            <person name="Brown L.L."/>
        </authorList>
    </citation>
    <scope>NUCLEOTIDE SEQUENCE [LARGE SCALE GENOMIC DNA]</scope>
    <source>
        <strain>A449</strain>
    </source>
</reference>
<sequence length="336" mass="37173">MIEADRLISATGVREDEIIDRAIRPKMLADYTGQDPVCEQMEIFIEAARQRGEALDHLLIFGPPGLGKTTLANIVANEMGVNIKTTSGPVLEKAGDLAALLTNLEPNDVLFIDEIHRLSPVVEEVLYPAMEDYQLDIMIGEGPAARSIKLDLPPFTLIGATTRAGSLTSPLRDRFGIVQRLEFYNVKDLTDIVSRSARCLGLEMTGDGALELARRSRGTPRIANRLLRRVRDFAQVKSDGRIDGPIAARAMDMLDVDNEGFDFMDRKLLLAVIDKFMGGPVGLDNLAAAIGEEKDTIEDVLEPYLIQQGYLQRTPRGRMATPRAYAHFGLQRPDER</sequence>
<keyword id="KW-0067">ATP-binding</keyword>
<keyword id="KW-0963">Cytoplasm</keyword>
<keyword id="KW-0227">DNA damage</keyword>
<keyword id="KW-0233">DNA recombination</keyword>
<keyword id="KW-0234">DNA repair</keyword>
<keyword id="KW-0238">DNA-binding</keyword>
<keyword id="KW-0378">Hydrolase</keyword>
<keyword id="KW-0547">Nucleotide-binding</keyword>